<proteinExistence type="inferred from homology"/>
<protein>
    <recommendedName>
        <fullName evidence="2">Ornithine carbamoyltransferase</fullName>
        <shortName evidence="2">OTCase</shortName>
        <ecNumber evidence="2">2.1.3.3</ecNumber>
    </recommendedName>
</protein>
<comment type="function">
    <text evidence="1">Reversibly catalyzes the transfer of the carbamoyl group from carbamoyl phosphate (CP) to the N(epsilon) atom of ornithine (ORN) to produce L-citrulline.</text>
</comment>
<comment type="catalytic activity">
    <reaction evidence="2">
        <text>carbamoyl phosphate + L-ornithine = L-citrulline + phosphate + H(+)</text>
        <dbReference type="Rhea" id="RHEA:19513"/>
        <dbReference type="ChEBI" id="CHEBI:15378"/>
        <dbReference type="ChEBI" id="CHEBI:43474"/>
        <dbReference type="ChEBI" id="CHEBI:46911"/>
        <dbReference type="ChEBI" id="CHEBI:57743"/>
        <dbReference type="ChEBI" id="CHEBI:58228"/>
        <dbReference type="EC" id="2.1.3.3"/>
    </reaction>
</comment>
<comment type="pathway">
    <text evidence="2">Amino-acid biosynthesis; L-arginine biosynthesis; L-arginine from L-ornithine and carbamoyl phosphate: step 1/3.</text>
</comment>
<comment type="subcellular location">
    <subcellularLocation>
        <location evidence="2">Cytoplasm</location>
    </subcellularLocation>
</comment>
<comment type="similarity">
    <text evidence="2">Belongs to the aspartate/ornithine carbamoyltransferase superfamily. OTCase family.</text>
</comment>
<keyword id="KW-0028">Amino-acid biosynthesis</keyword>
<keyword id="KW-0055">Arginine biosynthesis</keyword>
<keyword id="KW-0963">Cytoplasm</keyword>
<keyword id="KW-1185">Reference proteome</keyword>
<keyword id="KW-0808">Transferase</keyword>
<evidence type="ECO:0000250" key="1"/>
<evidence type="ECO:0000255" key="2">
    <source>
        <dbReference type="HAMAP-Rule" id="MF_01109"/>
    </source>
</evidence>
<dbReference type="EC" id="2.1.3.3" evidence="2"/>
<dbReference type="EMBL" id="CU207211">
    <property type="protein sequence ID" value="CAL61059.1"/>
    <property type="molecule type" value="Genomic_DNA"/>
</dbReference>
<dbReference type="SMR" id="A4G3H2"/>
<dbReference type="STRING" id="204773.HEAR0872"/>
<dbReference type="KEGG" id="har:HEAR0872"/>
<dbReference type="eggNOG" id="COG0078">
    <property type="taxonomic scope" value="Bacteria"/>
</dbReference>
<dbReference type="HOGENOM" id="CLU_043846_3_2_4"/>
<dbReference type="OrthoDB" id="9802587at2"/>
<dbReference type="UniPathway" id="UPA00068">
    <property type="reaction ID" value="UER00112"/>
</dbReference>
<dbReference type="Proteomes" id="UP000006697">
    <property type="component" value="Chromosome"/>
</dbReference>
<dbReference type="GO" id="GO:0005737">
    <property type="term" value="C:cytoplasm"/>
    <property type="evidence" value="ECO:0007669"/>
    <property type="project" value="UniProtKB-SubCell"/>
</dbReference>
<dbReference type="GO" id="GO:0016597">
    <property type="term" value="F:amino acid binding"/>
    <property type="evidence" value="ECO:0007669"/>
    <property type="project" value="InterPro"/>
</dbReference>
<dbReference type="GO" id="GO:0004585">
    <property type="term" value="F:ornithine carbamoyltransferase activity"/>
    <property type="evidence" value="ECO:0007669"/>
    <property type="project" value="UniProtKB-UniRule"/>
</dbReference>
<dbReference type="GO" id="GO:0042450">
    <property type="term" value="P:arginine biosynthetic process via ornithine"/>
    <property type="evidence" value="ECO:0007669"/>
    <property type="project" value="TreeGrafter"/>
</dbReference>
<dbReference type="GO" id="GO:0019240">
    <property type="term" value="P:citrulline biosynthetic process"/>
    <property type="evidence" value="ECO:0007669"/>
    <property type="project" value="TreeGrafter"/>
</dbReference>
<dbReference type="GO" id="GO:0006526">
    <property type="term" value="P:L-arginine biosynthetic process"/>
    <property type="evidence" value="ECO:0007669"/>
    <property type="project" value="UniProtKB-UniRule"/>
</dbReference>
<dbReference type="FunFam" id="3.40.50.1370:FF:000008">
    <property type="entry name" value="Ornithine carbamoyltransferase"/>
    <property type="match status" value="1"/>
</dbReference>
<dbReference type="Gene3D" id="3.40.50.1370">
    <property type="entry name" value="Aspartate/ornithine carbamoyltransferase"/>
    <property type="match status" value="2"/>
</dbReference>
<dbReference type="HAMAP" id="MF_01109">
    <property type="entry name" value="OTCase"/>
    <property type="match status" value="1"/>
</dbReference>
<dbReference type="InterPro" id="IPR006132">
    <property type="entry name" value="Asp/Orn_carbamoyltranf_P-bd"/>
</dbReference>
<dbReference type="InterPro" id="IPR006130">
    <property type="entry name" value="Asp/Orn_carbamoylTrfase"/>
</dbReference>
<dbReference type="InterPro" id="IPR036901">
    <property type="entry name" value="Asp/Orn_carbamoylTrfase_sf"/>
</dbReference>
<dbReference type="InterPro" id="IPR006131">
    <property type="entry name" value="Asp_carbamoyltransf_Asp/Orn-bd"/>
</dbReference>
<dbReference type="InterPro" id="IPR002292">
    <property type="entry name" value="Orn/put_carbamltrans"/>
</dbReference>
<dbReference type="InterPro" id="IPR024904">
    <property type="entry name" value="OTCase_ArgI"/>
</dbReference>
<dbReference type="NCBIfam" id="TIGR00658">
    <property type="entry name" value="orni_carb_tr"/>
    <property type="match status" value="1"/>
</dbReference>
<dbReference type="NCBIfam" id="NF001986">
    <property type="entry name" value="PRK00779.1"/>
    <property type="match status" value="1"/>
</dbReference>
<dbReference type="PANTHER" id="PTHR45753">
    <property type="entry name" value="ORNITHINE CARBAMOYLTRANSFERASE, MITOCHONDRIAL"/>
    <property type="match status" value="1"/>
</dbReference>
<dbReference type="PANTHER" id="PTHR45753:SF3">
    <property type="entry name" value="ORNITHINE TRANSCARBAMYLASE, MITOCHONDRIAL"/>
    <property type="match status" value="1"/>
</dbReference>
<dbReference type="Pfam" id="PF00185">
    <property type="entry name" value="OTCace"/>
    <property type="match status" value="1"/>
</dbReference>
<dbReference type="Pfam" id="PF02729">
    <property type="entry name" value="OTCace_N"/>
    <property type="match status" value="1"/>
</dbReference>
<dbReference type="PRINTS" id="PR00100">
    <property type="entry name" value="AOTCASE"/>
</dbReference>
<dbReference type="PRINTS" id="PR00102">
    <property type="entry name" value="OTCASE"/>
</dbReference>
<dbReference type="SUPFAM" id="SSF53671">
    <property type="entry name" value="Aspartate/ornithine carbamoyltransferase"/>
    <property type="match status" value="1"/>
</dbReference>
<dbReference type="PROSITE" id="PS00097">
    <property type="entry name" value="CARBAMOYLTRANSFERASE"/>
    <property type="match status" value="1"/>
</dbReference>
<sequence>MAIKHFLQFSDLTLDEFEYVIERTRIIKRKFKNYEPHHPLVDRTLVMVFEKNSTRTRLSFEAGMHQLGGAAIHLATRDSQLGRGEPVEDAAQVMSRMCDIIMIRTFGQDIIERFAANSRVPVINGLTNEHHPCQVLADVFTFIEHRGSIKGKTVAWIGDANNMLYSWLQAAQVFDFHVNVSTPKGYEIDPTLVAADNTHYKLYAAPSDACAGAHLVTTDVWTSMGFEEENAARLKAFDGWIVDAAKMKRAQPDALFMHCLPAHRGEEVAAEVIDGPQSVVWDEAENRLHAQKALLEYLVLGKLS</sequence>
<gene>
    <name evidence="2" type="primary">argF</name>
    <name type="ordered locus">HEAR0872</name>
</gene>
<name>OTC_HERAR</name>
<feature type="chain" id="PRO_1000137097" description="Ornithine carbamoyltransferase">
    <location>
        <begin position="1"/>
        <end position="304"/>
    </location>
</feature>
<feature type="binding site" evidence="2">
    <location>
        <begin position="53"/>
        <end position="56"/>
    </location>
    <ligand>
        <name>carbamoyl phosphate</name>
        <dbReference type="ChEBI" id="CHEBI:58228"/>
    </ligand>
</feature>
<feature type="binding site" evidence="2">
    <location>
        <position position="80"/>
    </location>
    <ligand>
        <name>carbamoyl phosphate</name>
        <dbReference type="ChEBI" id="CHEBI:58228"/>
    </ligand>
</feature>
<feature type="binding site" evidence="2">
    <location>
        <position position="104"/>
    </location>
    <ligand>
        <name>carbamoyl phosphate</name>
        <dbReference type="ChEBI" id="CHEBI:58228"/>
    </ligand>
</feature>
<feature type="binding site" evidence="2">
    <location>
        <begin position="131"/>
        <end position="134"/>
    </location>
    <ligand>
        <name>carbamoyl phosphate</name>
        <dbReference type="ChEBI" id="CHEBI:58228"/>
    </ligand>
</feature>
<feature type="binding site" evidence="2">
    <location>
        <position position="162"/>
    </location>
    <ligand>
        <name>L-ornithine</name>
        <dbReference type="ChEBI" id="CHEBI:46911"/>
    </ligand>
</feature>
<feature type="binding site" evidence="2">
    <location>
        <position position="219"/>
    </location>
    <ligand>
        <name>L-ornithine</name>
        <dbReference type="ChEBI" id="CHEBI:46911"/>
    </ligand>
</feature>
<feature type="binding site" evidence="2">
    <location>
        <begin position="223"/>
        <end position="224"/>
    </location>
    <ligand>
        <name>L-ornithine</name>
        <dbReference type="ChEBI" id="CHEBI:46911"/>
    </ligand>
</feature>
<feature type="binding site" evidence="2">
    <location>
        <begin position="259"/>
        <end position="260"/>
    </location>
    <ligand>
        <name>carbamoyl phosphate</name>
        <dbReference type="ChEBI" id="CHEBI:58228"/>
    </ligand>
</feature>
<feature type="binding site" evidence="2">
    <location>
        <position position="287"/>
    </location>
    <ligand>
        <name>carbamoyl phosphate</name>
        <dbReference type="ChEBI" id="CHEBI:58228"/>
    </ligand>
</feature>
<reference key="1">
    <citation type="journal article" date="2007" name="PLoS Genet.">
        <title>A tale of two oxidation states: bacterial colonization of arsenic-rich environments.</title>
        <authorList>
            <person name="Muller D."/>
            <person name="Medigue C."/>
            <person name="Koechler S."/>
            <person name="Barbe V."/>
            <person name="Barakat M."/>
            <person name="Talla E."/>
            <person name="Bonnefoy V."/>
            <person name="Krin E."/>
            <person name="Arsene-Ploetze F."/>
            <person name="Carapito C."/>
            <person name="Chandler M."/>
            <person name="Cournoyer B."/>
            <person name="Cruveiller S."/>
            <person name="Dossat C."/>
            <person name="Duval S."/>
            <person name="Heymann M."/>
            <person name="Leize E."/>
            <person name="Lieutaud A."/>
            <person name="Lievremont D."/>
            <person name="Makita Y."/>
            <person name="Mangenot S."/>
            <person name="Nitschke W."/>
            <person name="Ortet P."/>
            <person name="Perdrial N."/>
            <person name="Schoepp B."/>
            <person name="Siguier P."/>
            <person name="Simeonova D.D."/>
            <person name="Rouy Z."/>
            <person name="Segurens B."/>
            <person name="Turlin E."/>
            <person name="Vallenet D."/>
            <person name="van Dorsselaer A."/>
            <person name="Weiss S."/>
            <person name="Weissenbach J."/>
            <person name="Lett M.-C."/>
            <person name="Danchin A."/>
            <person name="Bertin P.N."/>
        </authorList>
    </citation>
    <scope>NUCLEOTIDE SEQUENCE [LARGE SCALE GENOMIC DNA]</scope>
    <source>
        <strain>ULPAs1</strain>
    </source>
</reference>
<organism>
    <name type="scientific">Herminiimonas arsenicoxydans</name>
    <dbReference type="NCBI Taxonomy" id="204773"/>
    <lineage>
        <taxon>Bacteria</taxon>
        <taxon>Pseudomonadati</taxon>
        <taxon>Pseudomonadota</taxon>
        <taxon>Betaproteobacteria</taxon>
        <taxon>Burkholderiales</taxon>
        <taxon>Oxalobacteraceae</taxon>
        <taxon>Herminiimonas</taxon>
    </lineage>
</organism>
<accession>A4G3H2</accession>